<feature type="chain" id="PRO_1000031957" description="2-keto-3-deoxygluconate permease">
    <location>
        <begin position="1"/>
        <end position="318"/>
    </location>
</feature>
<feature type="transmembrane region" description="Helical" evidence="1">
    <location>
        <begin position="10"/>
        <end position="30"/>
    </location>
</feature>
<feature type="transmembrane region" description="Helical" evidence="1">
    <location>
        <begin position="42"/>
        <end position="62"/>
    </location>
</feature>
<feature type="transmembrane region" description="Helical" evidence="1">
    <location>
        <begin position="82"/>
        <end position="102"/>
    </location>
</feature>
<feature type="transmembrane region" description="Helical" evidence="1">
    <location>
        <begin position="109"/>
        <end position="129"/>
    </location>
</feature>
<feature type="transmembrane region" description="Helical" evidence="1">
    <location>
        <begin position="139"/>
        <end position="159"/>
    </location>
</feature>
<feature type="transmembrane region" description="Helical" evidence="1">
    <location>
        <begin position="163"/>
        <end position="183"/>
    </location>
</feature>
<feature type="transmembrane region" description="Helical" evidence="1">
    <location>
        <begin position="201"/>
        <end position="221"/>
    </location>
</feature>
<feature type="transmembrane region" description="Helical" evidence="1">
    <location>
        <begin position="224"/>
        <end position="244"/>
    </location>
</feature>
<feature type="transmembrane region" description="Helical" evidence="1">
    <location>
        <begin position="257"/>
        <end position="277"/>
    </location>
</feature>
<feature type="transmembrane region" description="Helical" evidence="1">
    <location>
        <begin position="288"/>
        <end position="308"/>
    </location>
</feature>
<gene>
    <name evidence="1" type="primary">kdgT</name>
    <name type="ordered locus">XOO4083</name>
</gene>
<comment type="function">
    <text evidence="1">Catalyzes the proton-dependent uptake of 2-keto-3-deoxygluconate (KDG) into the cell.</text>
</comment>
<comment type="catalytic activity">
    <reaction evidence="1">
        <text>2-dehydro-3-deoxy-D-gluconate(in) + H(+)(in) = 2-dehydro-3-deoxy-D-gluconate(out) + H(+)(out)</text>
        <dbReference type="Rhea" id="RHEA:29943"/>
        <dbReference type="ChEBI" id="CHEBI:15378"/>
        <dbReference type="ChEBI" id="CHEBI:57990"/>
    </reaction>
    <physiologicalReaction direction="right-to-left" evidence="1">
        <dbReference type="Rhea" id="RHEA:29945"/>
    </physiologicalReaction>
</comment>
<comment type="subcellular location">
    <subcellularLocation>
        <location evidence="1">Cell inner membrane</location>
        <topology evidence="1">Multi-pass membrane protein</topology>
    </subcellularLocation>
</comment>
<comment type="similarity">
    <text evidence="1">Belongs to the KdgT transporter family.</text>
</comment>
<organism>
    <name type="scientific">Xanthomonas oryzae pv. oryzae (strain MAFF 311018)</name>
    <dbReference type="NCBI Taxonomy" id="342109"/>
    <lineage>
        <taxon>Bacteria</taxon>
        <taxon>Pseudomonadati</taxon>
        <taxon>Pseudomonadota</taxon>
        <taxon>Gammaproteobacteria</taxon>
        <taxon>Lysobacterales</taxon>
        <taxon>Lysobacteraceae</taxon>
        <taxon>Xanthomonas</taxon>
    </lineage>
</organism>
<name>KDGT_XANOM</name>
<accession>Q2NXY9</accession>
<dbReference type="EMBL" id="AP008229">
    <property type="protein sequence ID" value="BAE70838.1"/>
    <property type="molecule type" value="Genomic_DNA"/>
</dbReference>
<dbReference type="RefSeq" id="WP_011260636.1">
    <property type="nucleotide sequence ID" value="NC_007705.1"/>
</dbReference>
<dbReference type="KEGG" id="xom:XOO4083"/>
<dbReference type="HOGENOM" id="CLU_057476_0_1_6"/>
<dbReference type="GO" id="GO:0005886">
    <property type="term" value="C:plasma membrane"/>
    <property type="evidence" value="ECO:0007669"/>
    <property type="project" value="UniProtKB-SubCell"/>
</dbReference>
<dbReference type="GO" id="GO:0015649">
    <property type="term" value="F:2-keto-3-deoxygluconate:proton symporter activity"/>
    <property type="evidence" value="ECO:0007669"/>
    <property type="project" value="UniProtKB-UniRule"/>
</dbReference>
<dbReference type="HAMAP" id="MF_00070">
    <property type="entry name" value="KdgT"/>
    <property type="match status" value="1"/>
</dbReference>
<dbReference type="InterPro" id="IPR004684">
    <property type="entry name" value="2keto-3dGluconate_permease"/>
</dbReference>
<dbReference type="InterPro" id="IPR018395">
    <property type="entry name" value="2keto-3dGluconate_permease_sub"/>
</dbReference>
<dbReference type="NCBIfam" id="TIGR00793">
    <property type="entry name" value="kdgT"/>
    <property type="match status" value="1"/>
</dbReference>
<dbReference type="Pfam" id="PF03812">
    <property type="entry name" value="KdgT"/>
    <property type="match status" value="1"/>
</dbReference>
<keyword id="KW-0997">Cell inner membrane</keyword>
<keyword id="KW-1003">Cell membrane</keyword>
<keyword id="KW-0472">Membrane</keyword>
<keyword id="KW-0762">Sugar transport</keyword>
<keyword id="KW-0769">Symport</keyword>
<keyword id="KW-0812">Transmembrane</keyword>
<keyword id="KW-1133">Transmembrane helix</keyword>
<keyword id="KW-0813">Transport</keyword>
<sequence length="318" mass="32033">MRIKATVERLPGGMMLVPLLLGALCHTLWPQAGSTLGSFSNGLISGTVPILAVWFFCMGATIQLRASGRVLRRSGSLVLTKIAVAWLVAVVCAPLLPIGGIPSGPLTGLSVLALVAAMDMTNGGLYAALMQQYGSSEDAGAVVLMSLESGPLISMLILGASGLATFEPQLFVGAVLPLLLGFALGNLDAQLRQFFAQATQTLVPFFGFALGNTLDLSTIVHTGASGVLLGVAVIVITGLPLLLADRWLGGGDGTAGVAASSTAGAAVATPALIAGMAPQFAPAAPAATALVASAVIVTSVLVPLLTALQAGRSRQRIG</sequence>
<evidence type="ECO:0000255" key="1">
    <source>
        <dbReference type="HAMAP-Rule" id="MF_00070"/>
    </source>
</evidence>
<proteinExistence type="inferred from homology"/>
<reference key="1">
    <citation type="journal article" date="2005" name="Jpn. Agric. Res. Q.">
        <title>Genome sequence of Xanthomonas oryzae pv. oryzae suggests contribution of large numbers of effector genes and insertion sequences to its race diversity.</title>
        <authorList>
            <person name="Ochiai H."/>
            <person name="Inoue Y."/>
            <person name="Takeya M."/>
            <person name="Sasaki A."/>
            <person name="Kaku H."/>
        </authorList>
    </citation>
    <scope>NUCLEOTIDE SEQUENCE [LARGE SCALE GENOMIC DNA]</scope>
    <source>
        <strain>MAFF 311018</strain>
    </source>
</reference>
<protein>
    <recommendedName>
        <fullName evidence="1">2-keto-3-deoxygluconate permease</fullName>
        <shortName evidence="1">KDG permease</shortName>
    </recommendedName>
</protein>